<organism>
    <name type="scientific">Lactiplantibacillus plantarum (strain ATCC BAA-793 / NCIMB 8826 / WCFS1)</name>
    <name type="common">Lactobacillus plantarum</name>
    <dbReference type="NCBI Taxonomy" id="220668"/>
    <lineage>
        <taxon>Bacteria</taxon>
        <taxon>Bacillati</taxon>
        <taxon>Bacillota</taxon>
        <taxon>Bacilli</taxon>
        <taxon>Lactobacillales</taxon>
        <taxon>Lactobacillaceae</taxon>
        <taxon>Lactiplantibacillus</taxon>
    </lineage>
</organism>
<feature type="chain" id="PRO_0000090536" description="Rhamnulokinase">
    <location>
        <begin position="1"/>
        <end position="488"/>
    </location>
</feature>
<feature type="active site" description="Proton acceptor" evidence="1">
    <location>
        <position position="235"/>
    </location>
</feature>
<feature type="binding site" evidence="1">
    <location>
        <begin position="11"/>
        <end position="15"/>
    </location>
    <ligand>
        <name>ATP</name>
        <dbReference type="ChEBI" id="CHEBI:30616"/>
    </ligand>
</feature>
<feature type="binding site" evidence="1">
    <location>
        <position position="79"/>
    </location>
    <ligand>
        <name>substrate</name>
    </ligand>
</feature>
<feature type="binding site" evidence="1">
    <location>
        <begin position="234"/>
        <end position="236"/>
    </location>
    <ligand>
        <name>substrate</name>
    </ligand>
</feature>
<feature type="binding site" evidence="1">
    <location>
        <position position="257"/>
    </location>
    <ligand>
        <name>ATP</name>
        <dbReference type="ChEBI" id="CHEBI:30616"/>
    </ligand>
</feature>
<feature type="binding site" evidence="1">
    <location>
        <position position="294"/>
    </location>
    <ligand>
        <name>substrate</name>
    </ligand>
</feature>
<feature type="binding site" evidence="1">
    <location>
        <position position="302"/>
    </location>
    <ligand>
        <name>ATP</name>
        <dbReference type="ChEBI" id="CHEBI:30616"/>
    </ligand>
</feature>
<feature type="binding site" evidence="1">
    <location>
        <position position="401"/>
    </location>
    <ligand>
        <name>ATP</name>
        <dbReference type="ChEBI" id="CHEBI:30616"/>
    </ligand>
</feature>
<keyword id="KW-0067">ATP-binding</keyword>
<keyword id="KW-0418">Kinase</keyword>
<keyword id="KW-0460">Magnesium</keyword>
<keyword id="KW-0547">Nucleotide-binding</keyword>
<keyword id="KW-1185">Reference proteome</keyword>
<keyword id="KW-0684">Rhamnose metabolism</keyword>
<keyword id="KW-0808">Transferase</keyword>
<gene>
    <name evidence="1" type="primary">rhaB</name>
    <name type="ordered locus">lp_3595</name>
</gene>
<proteinExistence type="inferred from homology"/>
<accession>Q88S49</accession>
<accession>F9ULE9</accession>
<dbReference type="EC" id="2.7.1.5" evidence="1"/>
<dbReference type="EMBL" id="AL935263">
    <property type="protein sequence ID" value="CCC80556.1"/>
    <property type="molecule type" value="Genomic_DNA"/>
</dbReference>
<dbReference type="RefSeq" id="WP_003642942.1">
    <property type="nucleotide sequence ID" value="NC_004567.2"/>
</dbReference>
<dbReference type="RefSeq" id="YP_004891070.1">
    <property type="nucleotide sequence ID" value="NC_004567.2"/>
</dbReference>
<dbReference type="SMR" id="Q88S49"/>
<dbReference type="STRING" id="220668.lp_3595"/>
<dbReference type="EnsemblBacteria" id="CCC80556">
    <property type="protein sequence ID" value="CCC80556"/>
    <property type="gene ID" value="lp_3595"/>
</dbReference>
<dbReference type="KEGG" id="lpl:lp_3595"/>
<dbReference type="PATRIC" id="fig|220668.9.peg.3000"/>
<dbReference type="eggNOG" id="COG1070">
    <property type="taxonomic scope" value="Bacteria"/>
</dbReference>
<dbReference type="HOGENOM" id="CLU_039395_0_1_9"/>
<dbReference type="OrthoDB" id="9805576at2"/>
<dbReference type="PhylomeDB" id="Q88S49"/>
<dbReference type="UniPathway" id="UPA00541">
    <property type="reaction ID" value="UER00602"/>
</dbReference>
<dbReference type="Proteomes" id="UP000000432">
    <property type="component" value="Chromosome"/>
</dbReference>
<dbReference type="GO" id="GO:0005524">
    <property type="term" value="F:ATP binding"/>
    <property type="evidence" value="ECO:0007669"/>
    <property type="project" value="UniProtKB-KW"/>
</dbReference>
<dbReference type="GO" id="GO:0008993">
    <property type="term" value="F:rhamnulokinase activity"/>
    <property type="evidence" value="ECO:0007669"/>
    <property type="project" value="UniProtKB-UniRule"/>
</dbReference>
<dbReference type="GO" id="GO:0019301">
    <property type="term" value="P:rhamnose catabolic process"/>
    <property type="evidence" value="ECO:0007669"/>
    <property type="project" value="UniProtKB-UniRule"/>
</dbReference>
<dbReference type="CDD" id="cd07771">
    <property type="entry name" value="ASKHA_NBD_FGGY_RhaB-like"/>
    <property type="match status" value="1"/>
</dbReference>
<dbReference type="FunFam" id="3.30.420.40:FF:000064">
    <property type="entry name" value="Rhamnulokinase"/>
    <property type="match status" value="1"/>
</dbReference>
<dbReference type="Gene3D" id="3.30.420.40">
    <property type="match status" value="2"/>
</dbReference>
<dbReference type="HAMAP" id="MF_01535">
    <property type="entry name" value="Rhamnulokinase"/>
    <property type="match status" value="1"/>
</dbReference>
<dbReference type="InterPro" id="IPR043129">
    <property type="entry name" value="ATPase_NBD"/>
</dbReference>
<dbReference type="InterPro" id="IPR018485">
    <property type="entry name" value="FGGY_C"/>
</dbReference>
<dbReference type="InterPro" id="IPR050406">
    <property type="entry name" value="FGGY_Carb_Kinase"/>
</dbReference>
<dbReference type="InterPro" id="IPR018484">
    <property type="entry name" value="FGGY_N"/>
</dbReference>
<dbReference type="InterPro" id="IPR013449">
    <property type="entry name" value="Rhamnulokinase"/>
</dbReference>
<dbReference type="NCBIfam" id="TIGR02627">
    <property type="entry name" value="rhamnulo_kin"/>
    <property type="match status" value="1"/>
</dbReference>
<dbReference type="PANTHER" id="PTHR43095">
    <property type="entry name" value="SUGAR KINASE"/>
    <property type="match status" value="1"/>
</dbReference>
<dbReference type="Pfam" id="PF02782">
    <property type="entry name" value="FGGY_C"/>
    <property type="match status" value="1"/>
</dbReference>
<dbReference type="Pfam" id="PF00370">
    <property type="entry name" value="FGGY_N"/>
    <property type="match status" value="1"/>
</dbReference>
<dbReference type="SUPFAM" id="SSF53067">
    <property type="entry name" value="Actin-like ATPase domain"/>
    <property type="match status" value="2"/>
</dbReference>
<protein>
    <recommendedName>
        <fullName evidence="1">Rhamnulokinase</fullName>
        <shortName evidence="1">RhaB</shortName>
        <ecNumber evidence="1">2.7.1.5</ecNumber>
    </recommendedName>
    <alternativeName>
        <fullName evidence="1">ATP:L-rhamnulose phosphotransferase</fullName>
    </alternativeName>
    <alternativeName>
        <fullName evidence="1">L-rhamnulose 1-kinase</fullName>
    </alternativeName>
    <alternativeName>
        <fullName evidence="1">Rhamnulose kinase</fullName>
    </alternativeName>
</protein>
<comment type="function">
    <text evidence="1">Involved in the catabolism of L-rhamnose (6-deoxy-L-mannose). Catalyzes the transfer of the gamma-phosphate group from ATP to the 1-hydroxyl group of L-rhamnulose to yield L-rhamnulose 1-phosphate.</text>
</comment>
<comment type="catalytic activity">
    <reaction evidence="1">
        <text>L-rhamnulose + ATP = L-rhamnulose 1-phosphate + ADP + H(+)</text>
        <dbReference type="Rhea" id="RHEA:20117"/>
        <dbReference type="ChEBI" id="CHEBI:15378"/>
        <dbReference type="ChEBI" id="CHEBI:17897"/>
        <dbReference type="ChEBI" id="CHEBI:30616"/>
        <dbReference type="ChEBI" id="CHEBI:58313"/>
        <dbReference type="ChEBI" id="CHEBI:456216"/>
        <dbReference type="EC" id="2.7.1.5"/>
    </reaction>
</comment>
<comment type="cofactor">
    <cofactor evidence="1">
        <name>Mg(2+)</name>
        <dbReference type="ChEBI" id="CHEBI:18420"/>
    </cofactor>
</comment>
<comment type="pathway">
    <text evidence="1">Carbohydrate degradation; L-rhamnose degradation; glycerone phosphate from L-rhamnose: step 2/3.</text>
</comment>
<comment type="similarity">
    <text evidence="1">Belongs to the rhamnulokinase family.</text>
</comment>
<sequence length="488" mass="55266">MKSYIAVDIGASSGRLMLGQQKRGQLTLKEVHRFSNGFAMKDGHDRWDVDHLIHEIFKGLEKVKKMGIKDVELGIDTWAVDYVLVGENGHKLEDPISYRDKRTHNAIQQLTSDLPKEYIYEKTGIQFQDFNTLYQLYKENHDLLAKTDKIMMMPDYLGYVLTGNAVTEITNASTTQMLNLRVGLFDKDLLGKVNVSQDQFPRLVESGSVLGNVSHKWHTQYDIPEVEVVTVATHDTASAVVGTPGEGDRWAFLSSGTWSLLGTELNVPENGLQAFHENYTNEWGAYGTYRFLKNIMGLWVAQCVRHELGDQYSFGELADLAQQVRPFQQFIDINDERFTNPENMIKELQDYCRETKQTIPETPGELFQAIYSNLSLFYANELNKLDRILGYHIDTLNIVGGGSNVALMNQLTSTLANIKVVAGPSEATAVGNIMVQMITSDEVENIGAGRRLIETSFDLKRYLPETNKYGDILKEYQRFLTNKSKEMV</sequence>
<reference key="1">
    <citation type="journal article" date="2003" name="Proc. Natl. Acad. Sci. U.S.A.">
        <title>Complete genome sequence of Lactobacillus plantarum WCFS1.</title>
        <authorList>
            <person name="Kleerebezem M."/>
            <person name="Boekhorst J."/>
            <person name="van Kranenburg R."/>
            <person name="Molenaar D."/>
            <person name="Kuipers O.P."/>
            <person name="Leer R."/>
            <person name="Tarchini R."/>
            <person name="Peters S.A."/>
            <person name="Sandbrink H.M."/>
            <person name="Fiers M.W.E.J."/>
            <person name="Stiekema W."/>
            <person name="Klein Lankhorst R.M."/>
            <person name="Bron P.A."/>
            <person name="Hoffer S.M."/>
            <person name="Nierop Groot M.N."/>
            <person name="Kerkhoven R."/>
            <person name="De Vries M."/>
            <person name="Ursing B."/>
            <person name="De Vos W.M."/>
            <person name="Siezen R.J."/>
        </authorList>
    </citation>
    <scope>NUCLEOTIDE SEQUENCE [LARGE SCALE GENOMIC DNA]</scope>
    <source>
        <strain>ATCC BAA-793 / NCIMB 8826 / WCFS1</strain>
    </source>
</reference>
<reference key="2">
    <citation type="journal article" date="2012" name="J. Bacteriol.">
        <title>Complete resequencing and reannotation of the Lactobacillus plantarum WCFS1 genome.</title>
        <authorList>
            <person name="Siezen R.J."/>
            <person name="Francke C."/>
            <person name="Renckens B."/>
            <person name="Boekhorst J."/>
            <person name="Wels M."/>
            <person name="Kleerebezem M."/>
            <person name="van Hijum S.A."/>
        </authorList>
    </citation>
    <scope>NUCLEOTIDE SEQUENCE [LARGE SCALE GENOMIC DNA]</scope>
    <scope>GENOME REANNOTATION</scope>
    <source>
        <strain>ATCC BAA-793 / NCIMB 8826 / WCFS1</strain>
    </source>
</reference>
<name>RHAB_LACPL</name>
<evidence type="ECO:0000255" key="1">
    <source>
        <dbReference type="HAMAP-Rule" id="MF_01535"/>
    </source>
</evidence>